<keyword id="KW-0560">Oxidoreductase</keyword>
<proteinExistence type="inferred from homology"/>
<dbReference type="EC" id="1.8.4.11" evidence="1"/>
<dbReference type="EMBL" id="CP000964">
    <property type="protein sequence ID" value="ACI06650.1"/>
    <property type="molecule type" value="Genomic_DNA"/>
</dbReference>
<dbReference type="SMR" id="B5Y2Y3"/>
<dbReference type="KEGG" id="kpe:KPK_5049"/>
<dbReference type="HOGENOM" id="CLU_031040_10_3_6"/>
<dbReference type="Proteomes" id="UP000001734">
    <property type="component" value="Chromosome"/>
</dbReference>
<dbReference type="GO" id="GO:0005737">
    <property type="term" value="C:cytoplasm"/>
    <property type="evidence" value="ECO:0007669"/>
    <property type="project" value="TreeGrafter"/>
</dbReference>
<dbReference type="GO" id="GO:0036456">
    <property type="term" value="F:L-methionine-(S)-S-oxide reductase activity"/>
    <property type="evidence" value="ECO:0007669"/>
    <property type="project" value="TreeGrafter"/>
</dbReference>
<dbReference type="GO" id="GO:0008113">
    <property type="term" value="F:peptide-methionine (S)-S-oxide reductase activity"/>
    <property type="evidence" value="ECO:0007669"/>
    <property type="project" value="UniProtKB-UniRule"/>
</dbReference>
<dbReference type="GO" id="GO:0034599">
    <property type="term" value="P:cellular response to oxidative stress"/>
    <property type="evidence" value="ECO:0007669"/>
    <property type="project" value="TreeGrafter"/>
</dbReference>
<dbReference type="GO" id="GO:0036211">
    <property type="term" value="P:protein modification process"/>
    <property type="evidence" value="ECO:0007669"/>
    <property type="project" value="UniProtKB-UniRule"/>
</dbReference>
<dbReference type="FunFam" id="3.30.1060.10:FF:000001">
    <property type="entry name" value="Peptide methionine sulfoxide reductase MsrA"/>
    <property type="match status" value="1"/>
</dbReference>
<dbReference type="Gene3D" id="3.30.1060.10">
    <property type="entry name" value="Peptide methionine sulphoxide reductase MsrA"/>
    <property type="match status" value="1"/>
</dbReference>
<dbReference type="HAMAP" id="MF_01401">
    <property type="entry name" value="MsrA"/>
    <property type="match status" value="1"/>
</dbReference>
<dbReference type="InterPro" id="IPR002569">
    <property type="entry name" value="Met_Sox_Rdtase_MsrA_dom"/>
</dbReference>
<dbReference type="InterPro" id="IPR036509">
    <property type="entry name" value="Met_Sox_Rdtase_MsrA_sf"/>
</dbReference>
<dbReference type="InterPro" id="IPR050162">
    <property type="entry name" value="MsrA_MetSO_reductase"/>
</dbReference>
<dbReference type="NCBIfam" id="TIGR00401">
    <property type="entry name" value="msrA"/>
    <property type="match status" value="1"/>
</dbReference>
<dbReference type="PANTHER" id="PTHR42799">
    <property type="entry name" value="MITOCHONDRIAL PEPTIDE METHIONINE SULFOXIDE REDUCTASE"/>
    <property type="match status" value="1"/>
</dbReference>
<dbReference type="PANTHER" id="PTHR42799:SF2">
    <property type="entry name" value="MITOCHONDRIAL PEPTIDE METHIONINE SULFOXIDE REDUCTASE"/>
    <property type="match status" value="1"/>
</dbReference>
<dbReference type="Pfam" id="PF01625">
    <property type="entry name" value="PMSR"/>
    <property type="match status" value="1"/>
</dbReference>
<dbReference type="SUPFAM" id="SSF55068">
    <property type="entry name" value="Peptide methionine sulfoxide reductase"/>
    <property type="match status" value="1"/>
</dbReference>
<organism>
    <name type="scientific">Klebsiella pneumoniae (strain 342)</name>
    <dbReference type="NCBI Taxonomy" id="507522"/>
    <lineage>
        <taxon>Bacteria</taxon>
        <taxon>Pseudomonadati</taxon>
        <taxon>Pseudomonadota</taxon>
        <taxon>Gammaproteobacteria</taxon>
        <taxon>Enterobacterales</taxon>
        <taxon>Enterobacteriaceae</taxon>
        <taxon>Klebsiella/Raoultella group</taxon>
        <taxon>Klebsiella</taxon>
        <taxon>Klebsiella pneumoniae complex</taxon>
    </lineage>
</organism>
<gene>
    <name evidence="1" type="primary">msrA</name>
    <name type="ordered locus">KPK_5049</name>
</gene>
<name>MSRA_KLEP3</name>
<comment type="function">
    <text evidence="1">Has an important function as a repair enzyme for proteins that have been inactivated by oxidation. Catalyzes the reversible oxidation-reduction of methionine sulfoxide in proteins to methionine.</text>
</comment>
<comment type="catalytic activity">
    <reaction evidence="1">
        <text>L-methionyl-[protein] + [thioredoxin]-disulfide + H2O = L-methionyl-(S)-S-oxide-[protein] + [thioredoxin]-dithiol</text>
        <dbReference type="Rhea" id="RHEA:14217"/>
        <dbReference type="Rhea" id="RHEA-COMP:10698"/>
        <dbReference type="Rhea" id="RHEA-COMP:10700"/>
        <dbReference type="Rhea" id="RHEA-COMP:12313"/>
        <dbReference type="Rhea" id="RHEA-COMP:12315"/>
        <dbReference type="ChEBI" id="CHEBI:15377"/>
        <dbReference type="ChEBI" id="CHEBI:16044"/>
        <dbReference type="ChEBI" id="CHEBI:29950"/>
        <dbReference type="ChEBI" id="CHEBI:44120"/>
        <dbReference type="ChEBI" id="CHEBI:50058"/>
        <dbReference type="EC" id="1.8.4.11"/>
    </reaction>
</comment>
<comment type="catalytic activity">
    <reaction evidence="1">
        <text>[thioredoxin]-disulfide + L-methionine + H2O = L-methionine (S)-S-oxide + [thioredoxin]-dithiol</text>
        <dbReference type="Rhea" id="RHEA:19993"/>
        <dbReference type="Rhea" id="RHEA-COMP:10698"/>
        <dbReference type="Rhea" id="RHEA-COMP:10700"/>
        <dbReference type="ChEBI" id="CHEBI:15377"/>
        <dbReference type="ChEBI" id="CHEBI:29950"/>
        <dbReference type="ChEBI" id="CHEBI:50058"/>
        <dbReference type="ChEBI" id="CHEBI:57844"/>
        <dbReference type="ChEBI" id="CHEBI:58772"/>
        <dbReference type="EC" id="1.8.4.11"/>
    </reaction>
</comment>
<comment type="similarity">
    <text evidence="1">Belongs to the MsrA Met sulfoxide reductase family.</text>
</comment>
<evidence type="ECO:0000255" key="1">
    <source>
        <dbReference type="HAMAP-Rule" id="MF_01401"/>
    </source>
</evidence>
<protein>
    <recommendedName>
        <fullName evidence="1">Peptide methionine sulfoxide reductase MsrA</fullName>
        <shortName evidence="1">Protein-methionine-S-oxide reductase</shortName>
        <ecNumber evidence="1">1.8.4.11</ecNumber>
    </recommendedName>
    <alternativeName>
        <fullName evidence="1">Peptide-methionine (S)-S-oxide reductase</fullName>
        <shortName evidence="1">Peptide Met(O) reductase</shortName>
    </alternativeName>
</protein>
<reference key="1">
    <citation type="journal article" date="2008" name="PLoS Genet.">
        <title>Complete genome sequence of the N2-fixing broad host range endophyte Klebsiella pneumoniae 342 and virulence predictions verified in mice.</title>
        <authorList>
            <person name="Fouts D.E."/>
            <person name="Tyler H.L."/>
            <person name="DeBoy R.T."/>
            <person name="Daugherty S."/>
            <person name="Ren Q."/>
            <person name="Badger J.H."/>
            <person name="Durkin A.S."/>
            <person name="Huot H."/>
            <person name="Shrivastava S."/>
            <person name="Kothari S."/>
            <person name="Dodson R.J."/>
            <person name="Mohamoud Y."/>
            <person name="Khouri H."/>
            <person name="Roesch L.F.W."/>
            <person name="Krogfelt K.A."/>
            <person name="Struve C."/>
            <person name="Triplett E.W."/>
            <person name="Methe B.A."/>
        </authorList>
    </citation>
    <scope>NUCLEOTIDE SEQUENCE [LARGE SCALE GENOMIC DNA]</scope>
    <source>
        <strain>342</strain>
    </source>
</reference>
<accession>B5Y2Y3</accession>
<feature type="chain" id="PRO_1000145412" description="Peptide methionine sulfoxide reductase MsrA">
    <location>
        <begin position="1"/>
        <end position="211"/>
    </location>
</feature>
<feature type="active site" evidence="1">
    <location>
        <position position="52"/>
    </location>
</feature>
<sequence>MSLFDKTHLVAQADALPGRNTPMPVATLHAVNGHSMTNVPAGMEVALFAMGCFWGVERLFWQLPGVYSTAAGYTGGYTPNPTYREVCSGQTGHAEAVRVVYDPQVISYEQLLQVFWENHDPAQGMRQGNDHGTQYRSAIYPLTPEQTAAAKASLARFQAAMNDAHDTRHITTEIATAKPFYYAEDDHQQYLYKNPHGYCGIGGIGVCLPPQ</sequence>